<evidence type="ECO:0000255" key="1">
    <source>
        <dbReference type="HAMAP-Rule" id="MF_00185"/>
    </source>
</evidence>
<organism>
    <name type="scientific">Leifsonia xyli subsp. xyli (strain CTCB07)</name>
    <dbReference type="NCBI Taxonomy" id="281090"/>
    <lineage>
        <taxon>Bacteria</taxon>
        <taxon>Bacillati</taxon>
        <taxon>Actinomycetota</taxon>
        <taxon>Actinomycetes</taxon>
        <taxon>Micrococcales</taxon>
        <taxon>Microbacteriaceae</taxon>
        <taxon>Leifsonia</taxon>
    </lineage>
</organism>
<reference key="1">
    <citation type="journal article" date="2004" name="Mol. Plant Microbe Interact.">
        <title>The genome sequence of the Gram-positive sugarcane pathogen Leifsonia xyli subsp. xyli.</title>
        <authorList>
            <person name="Monteiro-Vitorello C.B."/>
            <person name="Camargo L.E.A."/>
            <person name="Van Sluys M.A."/>
            <person name="Kitajima J.P."/>
            <person name="Truffi D."/>
            <person name="do Amaral A.M."/>
            <person name="Harakava R."/>
            <person name="de Oliveira J.C.F."/>
            <person name="Wood D."/>
            <person name="de Oliveira M.C."/>
            <person name="Miyaki C.Y."/>
            <person name="Takita M.A."/>
            <person name="da Silva A.C.R."/>
            <person name="Furlan L.R."/>
            <person name="Carraro D.M."/>
            <person name="Camarotte G."/>
            <person name="Almeida N.F. Jr."/>
            <person name="Carrer H."/>
            <person name="Coutinho L.L."/>
            <person name="El-Dorry H.A."/>
            <person name="Ferro M.I.T."/>
            <person name="Gagliardi P.R."/>
            <person name="Giglioti E."/>
            <person name="Goldman M.H.S."/>
            <person name="Goldman G.H."/>
            <person name="Kimura E.T."/>
            <person name="Ferro E.S."/>
            <person name="Kuramae E.E."/>
            <person name="Lemos E.G.M."/>
            <person name="Lemos M.V.F."/>
            <person name="Mauro S.M.Z."/>
            <person name="Machado M.A."/>
            <person name="Marino C.L."/>
            <person name="Menck C.F."/>
            <person name="Nunes L.R."/>
            <person name="Oliveira R.C."/>
            <person name="Pereira G.G."/>
            <person name="Siqueira W."/>
            <person name="de Souza A.A."/>
            <person name="Tsai S.M."/>
            <person name="Zanca A.S."/>
            <person name="Simpson A.J.G."/>
            <person name="Brumbley S.M."/>
            <person name="Setubal J.C."/>
        </authorList>
    </citation>
    <scope>NUCLEOTIDE SEQUENCE [LARGE SCALE GENOMIC DNA]</scope>
    <source>
        <strain>CTCB07</strain>
    </source>
</reference>
<keyword id="KW-0067">ATP-binding</keyword>
<keyword id="KW-0460">Magnesium</keyword>
<keyword id="KW-0547">Nucleotide-binding</keyword>
<keyword id="KW-1185">Reference proteome</keyword>
<keyword id="KW-0808">Transferase</keyword>
<keyword id="KW-0819">tRNA processing</keyword>
<comment type="function">
    <text evidence="1">Catalyzes the transfer of a dimethylallyl group onto the adenine at position 37 in tRNAs that read codons beginning with uridine, leading to the formation of N6-(dimethylallyl)adenosine (i(6)A).</text>
</comment>
<comment type="catalytic activity">
    <reaction evidence="1">
        <text>adenosine(37) in tRNA + dimethylallyl diphosphate = N(6)-dimethylallyladenosine(37) in tRNA + diphosphate</text>
        <dbReference type="Rhea" id="RHEA:26482"/>
        <dbReference type="Rhea" id="RHEA-COMP:10162"/>
        <dbReference type="Rhea" id="RHEA-COMP:10375"/>
        <dbReference type="ChEBI" id="CHEBI:33019"/>
        <dbReference type="ChEBI" id="CHEBI:57623"/>
        <dbReference type="ChEBI" id="CHEBI:74411"/>
        <dbReference type="ChEBI" id="CHEBI:74415"/>
        <dbReference type="EC" id="2.5.1.75"/>
    </reaction>
</comment>
<comment type="cofactor">
    <cofactor evidence="1">
        <name>Mg(2+)</name>
        <dbReference type="ChEBI" id="CHEBI:18420"/>
    </cofactor>
</comment>
<comment type="subunit">
    <text evidence="1">Monomer.</text>
</comment>
<comment type="similarity">
    <text evidence="1">Belongs to the IPP transferase family.</text>
</comment>
<accession>Q6AE04</accession>
<name>MIAA_LEIXX</name>
<proteinExistence type="inferred from homology"/>
<protein>
    <recommendedName>
        <fullName evidence="1">tRNA dimethylallyltransferase</fullName>
        <ecNumber evidence="1">2.5.1.75</ecNumber>
    </recommendedName>
    <alternativeName>
        <fullName evidence="1">Dimethylallyl diphosphate:tRNA dimethylallyltransferase</fullName>
        <shortName evidence="1">DMAPP:tRNA dimethylallyltransferase</shortName>
        <shortName evidence="1">DMATase</shortName>
    </alternativeName>
    <alternativeName>
        <fullName evidence="1">Isopentenyl-diphosphate:tRNA isopentenyltransferase</fullName>
        <shortName evidence="1">IPP transferase</shortName>
        <shortName evidence="1">IPPT</shortName>
        <shortName evidence="1">IPTase</shortName>
    </alternativeName>
</protein>
<gene>
    <name evidence="1" type="primary">miaA</name>
    <name type="ordered locus">Lxx15980</name>
</gene>
<dbReference type="EC" id="2.5.1.75" evidence="1"/>
<dbReference type="EMBL" id="AE016822">
    <property type="protein sequence ID" value="AAT89392.1"/>
    <property type="molecule type" value="Genomic_DNA"/>
</dbReference>
<dbReference type="SMR" id="Q6AE04"/>
<dbReference type="STRING" id="281090.Lxx15980"/>
<dbReference type="KEGG" id="lxx:Lxx15980"/>
<dbReference type="eggNOG" id="COG0324">
    <property type="taxonomic scope" value="Bacteria"/>
</dbReference>
<dbReference type="HOGENOM" id="CLU_032616_0_1_11"/>
<dbReference type="Proteomes" id="UP000001306">
    <property type="component" value="Chromosome"/>
</dbReference>
<dbReference type="GO" id="GO:0005524">
    <property type="term" value="F:ATP binding"/>
    <property type="evidence" value="ECO:0007669"/>
    <property type="project" value="UniProtKB-UniRule"/>
</dbReference>
<dbReference type="GO" id="GO:0052381">
    <property type="term" value="F:tRNA dimethylallyltransferase activity"/>
    <property type="evidence" value="ECO:0007669"/>
    <property type="project" value="UniProtKB-UniRule"/>
</dbReference>
<dbReference type="GO" id="GO:0006400">
    <property type="term" value="P:tRNA modification"/>
    <property type="evidence" value="ECO:0007669"/>
    <property type="project" value="TreeGrafter"/>
</dbReference>
<dbReference type="FunFam" id="1.10.20.140:FF:000001">
    <property type="entry name" value="tRNA dimethylallyltransferase"/>
    <property type="match status" value="1"/>
</dbReference>
<dbReference type="Gene3D" id="1.10.20.140">
    <property type="match status" value="1"/>
</dbReference>
<dbReference type="Gene3D" id="3.40.50.300">
    <property type="entry name" value="P-loop containing nucleotide triphosphate hydrolases"/>
    <property type="match status" value="1"/>
</dbReference>
<dbReference type="HAMAP" id="MF_00185">
    <property type="entry name" value="IPP_trans"/>
    <property type="match status" value="1"/>
</dbReference>
<dbReference type="InterPro" id="IPR039657">
    <property type="entry name" value="Dimethylallyltransferase"/>
</dbReference>
<dbReference type="InterPro" id="IPR018022">
    <property type="entry name" value="IPT"/>
</dbReference>
<dbReference type="InterPro" id="IPR027417">
    <property type="entry name" value="P-loop_NTPase"/>
</dbReference>
<dbReference type="NCBIfam" id="TIGR00174">
    <property type="entry name" value="miaA"/>
    <property type="match status" value="1"/>
</dbReference>
<dbReference type="PANTHER" id="PTHR11088">
    <property type="entry name" value="TRNA DIMETHYLALLYLTRANSFERASE"/>
    <property type="match status" value="1"/>
</dbReference>
<dbReference type="PANTHER" id="PTHR11088:SF60">
    <property type="entry name" value="TRNA DIMETHYLALLYLTRANSFERASE"/>
    <property type="match status" value="1"/>
</dbReference>
<dbReference type="Pfam" id="PF01715">
    <property type="entry name" value="IPPT"/>
    <property type="match status" value="1"/>
</dbReference>
<dbReference type="SUPFAM" id="SSF52540">
    <property type="entry name" value="P-loop containing nucleoside triphosphate hydrolases"/>
    <property type="match status" value="1"/>
</dbReference>
<sequence length="263" mass="29163">MQLYRGMDIGTAKLPPGEWRGLPHHLFDVLDVTDEAAVARYQPEARRVVQEIRERGSTPILVGGSGLYVSSVVFDFRFPGTDTALRARLEAELAAQGPGTLFQRLLARDPEAAKRIGSSNGRRIVRALEVAELTGAAVSGALPEEPKPWVPVRVLGLAAPREELVQRLDARVERMWAEGLLAEVEGLIPLGIERSVTARRAIGYAQALAELTGELTRSQAQAQTQRLTRRYARRQLSWFKRYPGIHWLDYDDPQLVAAALARL</sequence>
<feature type="chain" id="PRO_0000377201" description="tRNA dimethylallyltransferase">
    <location>
        <begin position="1"/>
        <end position="263"/>
    </location>
</feature>
<feature type="site" description="Interaction with substrate tRNA" evidence="1">
    <location>
        <position position="65"/>
    </location>
</feature>
<feature type="site" description="Interaction with substrate tRNA" evidence="1">
    <location>
        <position position="86"/>
    </location>
</feature>